<organism>
    <name type="scientific">Clostridium botulinum (strain Alaska E43 / Type E3)</name>
    <dbReference type="NCBI Taxonomy" id="508767"/>
    <lineage>
        <taxon>Bacteria</taxon>
        <taxon>Bacillati</taxon>
        <taxon>Bacillota</taxon>
        <taxon>Clostridia</taxon>
        <taxon>Eubacteriales</taxon>
        <taxon>Clostridiaceae</taxon>
        <taxon>Clostridium</taxon>
    </lineage>
</organism>
<comment type="function">
    <text evidence="1">Binds to sigma F and blocks its ability to form an RNA polymerase holoenzyme (E-sigma F). Phosphorylates SpoIIAA on a serine residue. This phosphorylation may enable SpoIIAA to act as an anti-anti-sigma factor that counteracts SpoIIAB and thus releases sigma F from inhibition.</text>
</comment>
<comment type="catalytic activity">
    <reaction evidence="1">
        <text>L-seryl-[protein] + ATP = O-phospho-L-seryl-[protein] + ADP + H(+)</text>
        <dbReference type="Rhea" id="RHEA:17989"/>
        <dbReference type="Rhea" id="RHEA-COMP:9863"/>
        <dbReference type="Rhea" id="RHEA-COMP:11604"/>
        <dbReference type="ChEBI" id="CHEBI:15378"/>
        <dbReference type="ChEBI" id="CHEBI:29999"/>
        <dbReference type="ChEBI" id="CHEBI:30616"/>
        <dbReference type="ChEBI" id="CHEBI:83421"/>
        <dbReference type="ChEBI" id="CHEBI:456216"/>
        <dbReference type="EC" id="2.7.11.1"/>
    </reaction>
</comment>
<comment type="catalytic activity">
    <reaction evidence="1">
        <text>L-threonyl-[protein] + ATP = O-phospho-L-threonyl-[protein] + ADP + H(+)</text>
        <dbReference type="Rhea" id="RHEA:46608"/>
        <dbReference type="Rhea" id="RHEA-COMP:11060"/>
        <dbReference type="Rhea" id="RHEA-COMP:11605"/>
        <dbReference type="ChEBI" id="CHEBI:15378"/>
        <dbReference type="ChEBI" id="CHEBI:30013"/>
        <dbReference type="ChEBI" id="CHEBI:30616"/>
        <dbReference type="ChEBI" id="CHEBI:61977"/>
        <dbReference type="ChEBI" id="CHEBI:456216"/>
        <dbReference type="EC" id="2.7.11.1"/>
    </reaction>
</comment>
<comment type="similarity">
    <text evidence="1">Belongs to the anti-sigma-factor family.</text>
</comment>
<dbReference type="EC" id="2.7.11.1" evidence="1"/>
<dbReference type="EMBL" id="CP001078">
    <property type="protein sequence ID" value="ACD51891.1"/>
    <property type="molecule type" value="Genomic_DNA"/>
</dbReference>
<dbReference type="RefSeq" id="WP_012450152.1">
    <property type="nucleotide sequence ID" value="NC_010723.1"/>
</dbReference>
<dbReference type="SMR" id="B2V2G9"/>
<dbReference type="KEGG" id="cbt:CLH_0842"/>
<dbReference type="HOGENOM" id="CLU_090336_11_0_9"/>
<dbReference type="GO" id="GO:0005524">
    <property type="term" value="F:ATP binding"/>
    <property type="evidence" value="ECO:0007669"/>
    <property type="project" value="UniProtKB-KW"/>
</dbReference>
<dbReference type="GO" id="GO:0106310">
    <property type="term" value="F:protein serine kinase activity"/>
    <property type="evidence" value="ECO:0007669"/>
    <property type="project" value="RHEA"/>
</dbReference>
<dbReference type="GO" id="GO:0004674">
    <property type="term" value="F:protein serine/threonine kinase activity"/>
    <property type="evidence" value="ECO:0007669"/>
    <property type="project" value="UniProtKB-KW"/>
</dbReference>
<dbReference type="GO" id="GO:0016989">
    <property type="term" value="F:sigma factor antagonist activity"/>
    <property type="evidence" value="ECO:0007669"/>
    <property type="project" value="InterPro"/>
</dbReference>
<dbReference type="GO" id="GO:0030436">
    <property type="term" value="P:asexual sporulation"/>
    <property type="evidence" value="ECO:0007669"/>
    <property type="project" value="UniProtKB-UniRule"/>
</dbReference>
<dbReference type="GO" id="GO:0042174">
    <property type="term" value="P:negative regulation of sporulation resulting in formation of a cellular spore"/>
    <property type="evidence" value="ECO:0007669"/>
    <property type="project" value="InterPro"/>
</dbReference>
<dbReference type="GO" id="GO:0030435">
    <property type="term" value="P:sporulation resulting in formation of a cellular spore"/>
    <property type="evidence" value="ECO:0007669"/>
    <property type="project" value="UniProtKB-KW"/>
</dbReference>
<dbReference type="Gene3D" id="3.30.565.10">
    <property type="entry name" value="Histidine kinase-like ATPase, C-terminal domain"/>
    <property type="match status" value="1"/>
</dbReference>
<dbReference type="HAMAP" id="MF_00637">
    <property type="entry name" value="Anti_sigma_F"/>
    <property type="match status" value="1"/>
</dbReference>
<dbReference type="InterPro" id="IPR050267">
    <property type="entry name" value="Anti-sigma-factor_SerPK"/>
</dbReference>
<dbReference type="InterPro" id="IPR010194">
    <property type="entry name" value="Anti-sigma_F"/>
</dbReference>
<dbReference type="InterPro" id="IPR036890">
    <property type="entry name" value="HATPase_C_sf"/>
</dbReference>
<dbReference type="NCBIfam" id="TIGR01925">
    <property type="entry name" value="spIIAB"/>
    <property type="match status" value="1"/>
</dbReference>
<dbReference type="PANTHER" id="PTHR35526:SF3">
    <property type="entry name" value="ANTI-SIGMA-F FACTOR RSBW"/>
    <property type="match status" value="1"/>
</dbReference>
<dbReference type="PANTHER" id="PTHR35526">
    <property type="entry name" value="ANTI-SIGMA-F FACTOR RSBW-RELATED"/>
    <property type="match status" value="1"/>
</dbReference>
<dbReference type="Pfam" id="PF13581">
    <property type="entry name" value="HATPase_c_2"/>
    <property type="match status" value="1"/>
</dbReference>
<dbReference type="SMART" id="SM00387">
    <property type="entry name" value="HATPase_c"/>
    <property type="match status" value="1"/>
</dbReference>
<dbReference type="SUPFAM" id="SSF55874">
    <property type="entry name" value="ATPase domain of HSP90 chaperone/DNA topoisomerase II/histidine kinase"/>
    <property type="match status" value="1"/>
</dbReference>
<name>SP2AB_CLOBA</name>
<evidence type="ECO:0000255" key="1">
    <source>
        <dbReference type="HAMAP-Rule" id="MF_00637"/>
    </source>
</evidence>
<feature type="chain" id="PRO_1000130808" description="Anti-sigma F factor">
    <location>
        <begin position="1"/>
        <end position="143"/>
    </location>
</feature>
<accession>B2V2G9</accession>
<keyword id="KW-0067">ATP-binding</keyword>
<keyword id="KW-0418">Kinase</keyword>
<keyword id="KW-0547">Nucleotide-binding</keyword>
<keyword id="KW-0723">Serine/threonine-protein kinase</keyword>
<keyword id="KW-0749">Sporulation</keyword>
<keyword id="KW-0808">Transferase</keyword>
<protein>
    <recommendedName>
        <fullName evidence="1">Anti-sigma F factor</fullName>
        <ecNumber evidence="1">2.7.11.1</ecNumber>
    </recommendedName>
    <alternativeName>
        <fullName evidence="1">Stage II sporulation protein AB</fullName>
    </alternativeName>
</protein>
<gene>
    <name evidence="1" type="primary">spoIIAB</name>
    <name type="ordered locus">CLH_0842</name>
</gene>
<reference key="1">
    <citation type="submission" date="2008-05" db="EMBL/GenBank/DDBJ databases">
        <title>Complete genome sequence of Clostridium botulinum E3 str. Alaska E43.</title>
        <authorList>
            <person name="Brinkac L.M."/>
            <person name="Brown J.L."/>
            <person name="Bruce D."/>
            <person name="Detter C."/>
            <person name="Munk C."/>
            <person name="Smith L.A."/>
            <person name="Smith T.J."/>
            <person name="Sutton G."/>
            <person name="Brettin T.S."/>
        </authorList>
    </citation>
    <scope>NUCLEOTIDE SEQUENCE [LARGE SCALE GENOMIC DNA]</scope>
    <source>
        <strain>Alaska E43 / Type E3</strain>
    </source>
</reference>
<sequence length="143" mass="16013">MYENKMNLEFVSKSQNEAFARVAVAAFIAQLDPTIDEISDVKTAVSEAVTNSIIHGYENKEDGIIKIEVEICDGEVTIEITDNGKGIEDIPKVMEPLYTSRPDLERSGMGFTVMETFMDGLLVESEKEKGTRVRMKKKFNILS</sequence>
<proteinExistence type="inferred from homology"/>